<comment type="function">
    <text evidence="1 2">Probable substrate-specific adapter of a BCR (BTB-CUL3-RBX1) E3 ubiquitin-protein ligase complex mediating the ubiquitination and subsequent proteasomal degradation of target proteins. Promotes the ubiquitination of HDAC1; the function seems to depend on KCTD11:KCTD6 oligomerization. Can function as antagonist of the Hedgehog pathway by affecting the nuclear transfer of transcription factor GLI1; the function probably occurs via HDAC1 down-regulation, keeping GLI1 acetylated and inactive. Inhibits cell growth and tumorigenicity of medulloblastoma (MDB) (PubMed:21472142). Involved in regulating protein levels of ANK1 isoform Mu17 probably implicating CUL3-dependent proteasomal degradation (PubMed:22573887).</text>
</comment>
<comment type="pathway">
    <text>Protein modification; protein ubiquitination.</text>
</comment>
<comment type="subunit">
    <text evidence="1 2 3 4 5 6 7 8">Homopentamer. Interacts with KCTD11; KCTD6 and KCTD11 may associate in pentameric assemblies. Interacts (via BTB domain) with CUL3; initially a 4:4 stoichiometry has been reported, however, electron microscopy revealed pentameric states with a five-pointed pinwheel shape. The interaction with CUL3 is indicative for a participation in a BCR (BTB-CUL3-RBX1) E3 ubiquitin-protein ligase complex. Interacts with HDAC1; probably indirect as the interaction is requires the presence of KCTD11 (PubMed:21472142, PubMed:24307990, PubMed:25974686, PubMed:27152988). Interacts with USP21 (preferentially catalytic inactive form) (PubMed:27621083). Interacts with ANK1 isoform Mu17; detected in striated muscle (PubMed:22573887). Interacts with USP11 (PubMed:29293652).</text>
</comment>
<comment type="interaction">
    <interactant intactId="EBI-2511344">
        <id>Q8NC69</id>
    </interactant>
    <interactant intactId="EBI-351710">
        <id>P12814</id>
        <label>ACTN1</label>
    </interactant>
    <organismsDiffer>false</organismsDiffer>
    <experiments>3</experiments>
</comment>
<comment type="interaction">
    <interactant intactId="EBI-2511344">
        <id>Q8NC69</id>
    </interactant>
    <interactant intactId="EBI-2949658">
        <id>O95429</id>
        <label>BAG4</label>
    </interactant>
    <organismsDiffer>false</organismsDiffer>
    <experiments>3</experiments>
</comment>
<comment type="interaction">
    <interactant intactId="EBI-2511344">
        <id>Q8NC69</id>
    </interactant>
    <interactant intactId="EBI-715389">
        <id>Q9H7E9</id>
        <label>C8orf33</label>
    </interactant>
    <organismsDiffer>false</organismsDiffer>
    <experiments>3</experiments>
</comment>
<comment type="interaction">
    <interactant intactId="EBI-2511344">
        <id>Q8NC69</id>
    </interactant>
    <interactant intactId="EBI-396137">
        <id>Q9UJX2</id>
        <label>CDC23</label>
    </interactant>
    <organismsDiffer>false</organismsDiffer>
    <experiments>6</experiments>
</comment>
<comment type="interaction">
    <interactant intactId="EBI-2511344">
        <id>Q8NC69</id>
    </interactant>
    <interactant intactId="EBI-701963">
        <id>O60716-5</id>
        <label>CTNND1</label>
    </interactant>
    <organismsDiffer>false</organismsDiffer>
    <experiments>3</experiments>
</comment>
<comment type="interaction">
    <interactant intactId="EBI-2511344">
        <id>Q8NC69</id>
    </interactant>
    <interactant intactId="EBI-702059">
        <id>O60716-29</id>
        <label>CTNND1</label>
    </interactant>
    <organismsDiffer>false</organismsDiffer>
    <experiments>3</experiments>
</comment>
<comment type="interaction">
    <interactant intactId="EBI-2511344">
        <id>Q8NC69</id>
    </interactant>
    <interactant intactId="EBI-456129">
        <id>Q13618</id>
        <label>CUL3</label>
    </interactant>
    <organismsDiffer>false</organismsDiffer>
    <experiments>13</experiments>
</comment>
<comment type="interaction">
    <interactant intactId="EBI-2511344">
        <id>Q8NC69</id>
    </interactant>
    <interactant intactId="EBI-2339219">
        <id>Q08426</id>
        <label>EHHADH</label>
    </interactant>
    <organismsDiffer>false</organismsDiffer>
    <experiments>6</experiments>
</comment>
<comment type="interaction">
    <interactant intactId="EBI-2511344">
        <id>Q8NC69</id>
    </interactant>
    <interactant intactId="EBI-741626">
        <id>Q9H5Z6</id>
        <label>FAM124B</label>
    </interactant>
    <organismsDiffer>false</organismsDiffer>
    <experiments>3</experiments>
</comment>
<comment type="interaction">
    <interactant intactId="EBI-2511344">
        <id>Q8NC69</id>
    </interactant>
    <interactant intactId="EBI-10181276">
        <id>Q0D2H9</id>
        <label>GOLGA8DP</label>
    </interactant>
    <organismsDiffer>false</organismsDiffer>
    <experiments>3</experiments>
</comment>
<comment type="interaction">
    <interactant intactId="EBI-2511344">
        <id>Q8NC69</id>
    </interactant>
    <interactant intactId="EBI-10181260">
        <id>Q08AF8</id>
        <label>GOLGA8G</label>
    </interactant>
    <organismsDiffer>false</organismsDiffer>
    <experiments>3</experiments>
</comment>
<comment type="interaction">
    <interactant intactId="EBI-2511344">
        <id>Q8NC69</id>
    </interactant>
    <interactant intactId="EBI-970191">
        <id>Q14451</id>
        <label>GRB7</label>
    </interactant>
    <organismsDiffer>false</organismsDiffer>
    <experiments>3</experiments>
</comment>
<comment type="interaction">
    <interactant intactId="EBI-2511344">
        <id>Q8NC69</id>
    </interactant>
    <interactant intactId="EBI-11991632">
        <id>Q14451-3</id>
        <label>GRB7</label>
    </interactant>
    <organismsDiffer>false</organismsDiffer>
    <experiments>3</experiments>
</comment>
<comment type="interaction">
    <interactant intactId="EBI-2511344">
        <id>Q8NC69</id>
    </interactant>
    <interactant intactId="EBI-2798865">
        <id>P57764</id>
        <label>GSDMD</label>
    </interactant>
    <organismsDiffer>false</organismsDiffer>
    <experiments>7</experiments>
</comment>
<comment type="interaction">
    <interactant intactId="EBI-2511344">
        <id>Q8NC69</id>
    </interactant>
    <interactant intactId="EBI-2511344">
        <id>Q8NC69</id>
        <label>KCTD6</label>
    </interactant>
    <organismsDiffer>false</organismsDiffer>
    <experiments>9</experiments>
</comment>
<comment type="interaction">
    <interactant intactId="EBI-2511344">
        <id>Q8NC69</id>
    </interactant>
    <interactant intactId="EBI-739832">
        <id>Q8TBB1</id>
        <label>LNX1</label>
    </interactant>
    <organismsDiffer>false</organismsDiffer>
    <experiments>4</experiments>
</comment>
<comment type="interaction">
    <interactant intactId="EBI-2511344">
        <id>Q8NC69</id>
    </interactant>
    <interactant intactId="EBI-1757866">
        <id>P00540</id>
        <label>MOS</label>
    </interactant>
    <organismsDiffer>false</organismsDiffer>
    <experiments>3</experiments>
</comment>
<comment type="interaction">
    <interactant intactId="EBI-2511344">
        <id>Q8NC69</id>
    </interactant>
    <interactant intactId="EBI-741158">
        <id>Q96HA8</id>
        <label>NTAQ1</label>
    </interactant>
    <organismsDiffer>false</organismsDiffer>
    <experiments>3</experiments>
</comment>
<comment type="interaction">
    <interactant intactId="EBI-2511344">
        <id>Q8NC69</id>
    </interactant>
    <interactant intactId="EBI-79165">
        <id>Q9NRD5</id>
        <label>PICK1</label>
    </interactant>
    <organismsDiffer>false</organismsDiffer>
    <experiments>3</experiments>
</comment>
<comment type="interaction">
    <interactant intactId="EBI-2511344">
        <id>Q8NC69</id>
    </interactant>
    <interactant intactId="EBI-396072">
        <id>Q13427</id>
        <label>PPIG</label>
    </interactant>
    <organismsDiffer>false</organismsDiffer>
    <experiments>3</experiments>
</comment>
<comment type="interaction">
    <interactant intactId="EBI-2511344">
        <id>Q8NC69</id>
    </interactant>
    <interactant intactId="EBI-1567797">
        <id>Q8WWY3</id>
        <label>PRPF31</label>
    </interactant>
    <organismsDiffer>false</organismsDiffer>
    <experiments>10</experiments>
</comment>
<comment type="interaction">
    <interactant intactId="EBI-2511344">
        <id>Q8NC69</id>
    </interactant>
    <interactant intactId="EBI-359352">
        <id>P25786</id>
        <label>PSMA1</label>
    </interactant>
    <organismsDiffer>false</organismsDiffer>
    <experiments>6</experiments>
</comment>
<comment type="interaction">
    <interactant intactId="EBI-2511344">
        <id>Q8NC69</id>
    </interactant>
    <interactant intactId="EBI-10829018">
        <id>Q04864-2</id>
        <label>REL</label>
    </interactant>
    <organismsDiffer>false</organismsDiffer>
    <experiments>3</experiments>
</comment>
<comment type="interaction">
    <interactant intactId="EBI-2511344">
        <id>Q8NC69</id>
    </interactant>
    <interactant intactId="EBI-727004">
        <id>O00560</id>
        <label>SDCBP</label>
    </interactant>
    <organismsDiffer>false</organismsDiffer>
    <experiments>6</experiments>
</comment>
<comment type="interaction">
    <interactant intactId="EBI-2511344">
        <id>Q8NC69</id>
    </interactant>
    <interactant intactId="EBI-13560915">
        <id>Q9BYX2-5</id>
        <label>TBC1D2</label>
    </interactant>
    <organismsDiffer>false</organismsDiffer>
    <experiments>3</experiments>
</comment>
<comment type="interaction">
    <interactant intactId="EBI-2511344">
        <id>Q8NC69</id>
    </interactant>
    <interactant intactId="EBI-11955057">
        <id>Q8N8B7-2</id>
        <label>TCEANC</label>
    </interactant>
    <organismsDiffer>false</organismsDiffer>
    <experiments>3</experiments>
</comment>
<comment type="interaction">
    <interactant intactId="EBI-2511344">
        <id>Q8NC69</id>
    </interactant>
    <interactant intactId="EBI-11139477">
        <id>Q96N21</id>
        <label>TEPSIN</label>
    </interactant>
    <organismsDiffer>false</organismsDiffer>
    <experiments>3</experiments>
</comment>
<comment type="interaction">
    <interactant intactId="EBI-2511344">
        <id>Q8NC69</id>
    </interactant>
    <interactant intactId="EBI-597063">
        <id>Q8TBK6</id>
        <label>ZCCHC10</label>
    </interactant>
    <organismsDiffer>false</organismsDiffer>
    <experiments>3</experiments>
</comment>
<comment type="interaction">
    <interactant intactId="EBI-2511344">
        <id>Q8NC69</id>
    </interactant>
    <interactant intactId="EBI-10175581">
        <id>B2R8Y4</id>
    </interactant>
    <organismsDiffer>false</organismsDiffer>
    <experiments>3</experiments>
</comment>
<comment type="subcellular location">
    <subcellularLocation>
        <location evidence="2">Cytoplasm</location>
        <location evidence="2">Myofibril</location>
        <location evidence="2">Sarcomere</location>
        <location evidence="2">M line</location>
    </subcellularLocation>
    <text evidence="2">Colocalizes with ANK1 isoform Mu17 at the M line in differentiated skeletal muscle cells and heart.</text>
</comment>
<comment type="tissue specificity">
    <text evidence="1">Highly expressed in cerebellum and brain. Expression is down-regulated in medulloblastoma.</text>
</comment>
<organism>
    <name type="scientific">Homo sapiens</name>
    <name type="common">Human</name>
    <dbReference type="NCBI Taxonomy" id="9606"/>
    <lineage>
        <taxon>Eukaryota</taxon>
        <taxon>Metazoa</taxon>
        <taxon>Chordata</taxon>
        <taxon>Craniata</taxon>
        <taxon>Vertebrata</taxon>
        <taxon>Euteleostomi</taxon>
        <taxon>Mammalia</taxon>
        <taxon>Eutheria</taxon>
        <taxon>Euarchontoglires</taxon>
        <taxon>Primates</taxon>
        <taxon>Haplorrhini</taxon>
        <taxon>Catarrhini</taxon>
        <taxon>Hominidae</taxon>
        <taxon>Homo</taxon>
    </lineage>
</organism>
<accession>Q8NC69</accession>
<accession>B3KNI5</accession>
<accession>Q8NBS6</accession>
<accession>Q8TCA6</accession>
<sequence length="237" mass="27610">MDNGDWGYMMTDPVTLNVGGHLYTTSLTTLTRYPDSMLGAMFGGDFPTARDPQGNYFIDRDGPLFRYVLNFLRTSELTLPLDFKEFDLLRKEADFYQIEPLIQCLNDPKPLYPMDTFEEVVELSSTRKLSKYSNPVAVIITQLTITTKVHSLLEGISNYFTKWNKHMMDTRDCQVSFTFGPCDYHQEVSLRVHLMEYITKQGFTIRNTRVHHMSERANENTVEHNWTFCRLARKTDD</sequence>
<feature type="chain" id="PRO_0000251248" description="BTB/POZ domain-containing protein KCTD6">
    <location>
        <begin position="1"/>
        <end position="237"/>
    </location>
</feature>
<feature type="domain" description="BTB">
    <location>
        <begin position="12"/>
        <end position="81"/>
    </location>
</feature>
<feature type="region of interest" description="Interaction with ANK1 isoform Mu17" evidence="2">
    <location>
        <begin position="1"/>
        <end position="104"/>
    </location>
</feature>
<feature type="region of interest" description="Interaction with CUL3" evidence="4">
    <location>
        <begin position="10"/>
        <end position="110"/>
    </location>
</feature>
<feature type="region of interest" description="Interaction with USP21" evidence="7">
    <location>
        <begin position="113"/>
        <end position="187"/>
    </location>
</feature>
<feature type="sequence conflict" description="In Ref. 2; BAC11531." evidence="10" ref="2">
    <original>A</original>
    <variation>T</variation>
    <location>
        <position position="49"/>
    </location>
</feature>
<feature type="sequence conflict" description="In Ref. 2; BAC11531." evidence="10" ref="2">
    <original>D</original>
    <variation>N</variation>
    <location>
        <position position="59"/>
    </location>
</feature>
<dbReference type="EMBL" id="AK027572">
    <property type="protein sequence ID" value="BAG51347.1"/>
    <property type="molecule type" value="mRNA"/>
</dbReference>
<dbReference type="EMBL" id="AK074934">
    <property type="protein sequence ID" value="BAC11301.1"/>
    <property type="molecule type" value="mRNA"/>
</dbReference>
<dbReference type="EMBL" id="AK075297">
    <property type="protein sequence ID" value="BAC11531.1"/>
    <property type="molecule type" value="mRNA"/>
</dbReference>
<dbReference type="EMBL" id="CH471055">
    <property type="protein sequence ID" value="EAW65374.1"/>
    <property type="molecule type" value="Genomic_DNA"/>
</dbReference>
<dbReference type="EMBL" id="BC022893">
    <property type="protein sequence ID" value="AAH22893.2"/>
    <property type="molecule type" value="mRNA"/>
</dbReference>
<dbReference type="CCDS" id="CCDS2891.1"/>
<dbReference type="RefSeq" id="NP_001121686.1">
    <property type="nucleotide sequence ID" value="NM_001128214.2"/>
</dbReference>
<dbReference type="RefSeq" id="NP_699162.3">
    <property type="nucleotide sequence ID" value="NM_153331.3"/>
</dbReference>
<dbReference type="RefSeq" id="XP_005264994.1">
    <property type="nucleotide sequence ID" value="XM_005264937.3"/>
</dbReference>
<dbReference type="RefSeq" id="XP_054201592.1">
    <property type="nucleotide sequence ID" value="XM_054345617.1"/>
</dbReference>
<dbReference type="SMR" id="Q8NC69"/>
<dbReference type="BioGRID" id="128350">
    <property type="interactions" value="69"/>
</dbReference>
<dbReference type="CORUM" id="Q8NC69"/>
<dbReference type="FunCoup" id="Q8NC69">
    <property type="interactions" value="935"/>
</dbReference>
<dbReference type="IntAct" id="Q8NC69">
    <property type="interactions" value="66"/>
</dbReference>
<dbReference type="MINT" id="Q8NC69"/>
<dbReference type="STRING" id="9606.ENSP00000347188"/>
<dbReference type="iPTMnet" id="Q8NC69"/>
<dbReference type="PhosphoSitePlus" id="Q8NC69"/>
<dbReference type="BioMuta" id="KCTD6"/>
<dbReference type="DMDM" id="115502243"/>
<dbReference type="jPOST" id="Q8NC69"/>
<dbReference type="MassIVE" id="Q8NC69"/>
<dbReference type="PaxDb" id="9606-ENSP00000347188"/>
<dbReference type="PeptideAtlas" id="Q8NC69"/>
<dbReference type="ProteomicsDB" id="72859"/>
<dbReference type="Pumba" id="Q8NC69"/>
<dbReference type="Antibodypedia" id="15221">
    <property type="antibodies" value="137 antibodies from 20 providers"/>
</dbReference>
<dbReference type="DNASU" id="200845"/>
<dbReference type="Ensembl" id="ENST00000355076.6">
    <property type="protein sequence ID" value="ENSP00000347188.6"/>
    <property type="gene ID" value="ENSG00000168301.13"/>
</dbReference>
<dbReference type="Ensembl" id="ENST00000404589.8">
    <property type="protein sequence ID" value="ENSP00000384948.3"/>
    <property type="gene ID" value="ENSG00000168301.13"/>
</dbReference>
<dbReference type="Ensembl" id="ENST00000490264.1">
    <property type="protein sequence ID" value="ENSP00000417490.1"/>
    <property type="gene ID" value="ENSG00000168301.13"/>
</dbReference>
<dbReference type="GeneID" id="200845"/>
<dbReference type="KEGG" id="hsa:200845"/>
<dbReference type="MANE-Select" id="ENST00000404589.8">
    <property type="protein sequence ID" value="ENSP00000384948.3"/>
    <property type="RefSeq nucleotide sequence ID" value="NM_001128214.2"/>
    <property type="RefSeq protein sequence ID" value="NP_001121686.1"/>
</dbReference>
<dbReference type="UCSC" id="uc003dkj.5">
    <property type="organism name" value="human"/>
</dbReference>
<dbReference type="AGR" id="HGNC:22235"/>
<dbReference type="CTD" id="200845"/>
<dbReference type="DisGeNET" id="200845"/>
<dbReference type="GeneCards" id="KCTD6"/>
<dbReference type="HGNC" id="HGNC:22235">
    <property type="gene designation" value="KCTD6"/>
</dbReference>
<dbReference type="HPA" id="ENSG00000168301">
    <property type="expression patterns" value="Low tissue specificity"/>
</dbReference>
<dbReference type="MIM" id="618791">
    <property type="type" value="gene"/>
</dbReference>
<dbReference type="neXtProt" id="NX_Q8NC69"/>
<dbReference type="OpenTargets" id="ENSG00000168301"/>
<dbReference type="PharmGKB" id="PA134918095"/>
<dbReference type="VEuPathDB" id="HostDB:ENSG00000168301"/>
<dbReference type="eggNOG" id="KOG2723">
    <property type="taxonomic scope" value="Eukaryota"/>
</dbReference>
<dbReference type="GeneTree" id="ENSGT00940000157869"/>
<dbReference type="HOGENOM" id="CLU_070345_1_0_1"/>
<dbReference type="InParanoid" id="Q8NC69"/>
<dbReference type="OMA" id="FTIRMTR"/>
<dbReference type="OrthoDB" id="2414723at2759"/>
<dbReference type="PAN-GO" id="Q8NC69">
    <property type="GO annotations" value="2 GO annotations based on evolutionary models"/>
</dbReference>
<dbReference type="PhylomeDB" id="Q8NC69"/>
<dbReference type="TreeFam" id="TF315332"/>
<dbReference type="PathwayCommons" id="Q8NC69"/>
<dbReference type="Reactome" id="R-HSA-8931987">
    <property type="pathway name" value="RUNX1 regulates estrogen receptor mediated transcription"/>
</dbReference>
<dbReference type="Reactome" id="R-HSA-8951664">
    <property type="pathway name" value="Neddylation"/>
</dbReference>
<dbReference type="Reactome" id="R-HSA-9018519">
    <property type="pathway name" value="Estrogen-dependent gene expression"/>
</dbReference>
<dbReference type="Reactome" id="R-HSA-983168">
    <property type="pathway name" value="Antigen processing: Ubiquitination &amp; Proteasome degradation"/>
</dbReference>
<dbReference type="SignaLink" id="Q8NC69"/>
<dbReference type="UniPathway" id="UPA00143"/>
<dbReference type="BioGRID-ORCS" id="200845">
    <property type="hits" value="23 hits in 1159 CRISPR screens"/>
</dbReference>
<dbReference type="CD-CODE" id="B5B9A610">
    <property type="entry name" value="PML body"/>
</dbReference>
<dbReference type="ChiTaRS" id="KCTD6">
    <property type="organism name" value="human"/>
</dbReference>
<dbReference type="GenomeRNAi" id="200845"/>
<dbReference type="Pharos" id="Q8NC69">
    <property type="development level" value="Tbio"/>
</dbReference>
<dbReference type="PRO" id="PR:Q8NC69"/>
<dbReference type="Proteomes" id="UP000005640">
    <property type="component" value="Chromosome 3"/>
</dbReference>
<dbReference type="RNAct" id="Q8NC69">
    <property type="molecule type" value="protein"/>
</dbReference>
<dbReference type="Bgee" id="ENSG00000168301">
    <property type="expression patterns" value="Expressed in pigmented layer of retina and 192 other cell types or tissues"/>
</dbReference>
<dbReference type="ExpressionAtlas" id="Q8NC69">
    <property type="expression patterns" value="baseline and differential"/>
</dbReference>
<dbReference type="GO" id="GO:0005829">
    <property type="term" value="C:cytosol"/>
    <property type="evidence" value="ECO:0000304"/>
    <property type="project" value="Reactome"/>
</dbReference>
<dbReference type="GO" id="GO:0031430">
    <property type="term" value="C:M band"/>
    <property type="evidence" value="ECO:0007669"/>
    <property type="project" value="UniProtKB-SubCell"/>
</dbReference>
<dbReference type="GO" id="GO:0030506">
    <property type="term" value="F:ankyrin binding"/>
    <property type="evidence" value="ECO:0000314"/>
    <property type="project" value="MGI"/>
</dbReference>
<dbReference type="GO" id="GO:0097602">
    <property type="term" value="F:cullin family protein binding"/>
    <property type="evidence" value="ECO:0000314"/>
    <property type="project" value="UniProtKB"/>
</dbReference>
<dbReference type="GO" id="GO:0042802">
    <property type="term" value="F:identical protein binding"/>
    <property type="evidence" value="ECO:0000353"/>
    <property type="project" value="IntAct"/>
</dbReference>
<dbReference type="GO" id="GO:0045879">
    <property type="term" value="P:negative regulation of smoothened signaling pathway"/>
    <property type="evidence" value="ECO:0000314"/>
    <property type="project" value="UniProtKB"/>
</dbReference>
<dbReference type="GO" id="GO:0051260">
    <property type="term" value="P:protein homooligomerization"/>
    <property type="evidence" value="ECO:0007669"/>
    <property type="project" value="InterPro"/>
</dbReference>
<dbReference type="GO" id="GO:0016567">
    <property type="term" value="P:protein ubiquitination"/>
    <property type="evidence" value="ECO:0007669"/>
    <property type="project" value="UniProtKB-UniPathway"/>
</dbReference>
<dbReference type="GO" id="GO:0006511">
    <property type="term" value="P:ubiquitin-dependent protein catabolic process"/>
    <property type="evidence" value="ECO:0000314"/>
    <property type="project" value="UniProtKB"/>
</dbReference>
<dbReference type="CDD" id="cd18394">
    <property type="entry name" value="BTB_POZ_KCTD6"/>
    <property type="match status" value="1"/>
</dbReference>
<dbReference type="FunFam" id="3.30.710.10:FF:000003">
    <property type="entry name" value="BTB/POZ domain-containing protein KCTD6 isoform X2"/>
    <property type="match status" value="1"/>
</dbReference>
<dbReference type="Gene3D" id="3.30.710.10">
    <property type="entry name" value="Potassium Channel Kv1.1, Chain A"/>
    <property type="match status" value="1"/>
</dbReference>
<dbReference type="InterPro" id="IPR000210">
    <property type="entry name" value="BTB/POZ_dom"/>
</dbReference>
<dbReference type="InterPro" id="IPR011333">
    <property type="entry name" value="SKP1/BTB/POZ_sf"/>
</dbReference>
<dbReference type="InterPro" id="IPR003131">
    <property type="entry name" value="T1-type_BTB"/>
</dbReference>
<dbReference type="PANTHER" id="PTHR14499:SF10">
    <property type="entry name" value="BTB_POZ DOMAIN-CONTAINING PROTEIN KCTD6"/>
    <property type="match status" value="1"/>
</dbReference>
<dbReference type="PANTHER" id="PTHR14499">
    <property type="entry name" value="POTASSIUM CHANNEL TETRAMERIZATION DOMAIN-CONTAINING"/>
    <property type="match status" value="1"/>
</dbReference>
<dbReference type="Pfam" id="PF02214">
    <property type="entry name" value="BTB_2"/>
    <property type="match status" value="1"/>
</dbReference>
<dbReference type="SMART" id="SM00225">
    <property type="entry name" value="BTB"/>
    <property type="match status" value="1"/>
</dbReference>
<dbReference type="SUPFAM" id="SSF54695">
    <property type="entry name" value="POZ domain"/>
    <property type="match status" value="1"/>
</dbReference>
<evidence type="ECO:0000269" key="1">
    <source>
    </source>
</evidence>
<evidence type="ECO:0000269" key="2">
    <source>
    </source>
</evidence>
<evidence type="ECO:0000269" key="3">
    <source>
    </source>
</evidence>
<evidence type="ECO:0000269" key="4">
    <source>
    </source>
</evidence>
<evidence type="ECO:0000269" key="5">
    <source>
    </source>
</evidence>
<evidence type="ECO:0000269" key="6">
    <source>
    </source>
</evidence>
<evidence type="ECO:0000269" key="7">
    <source>
    </source>
</evidence>
<evidence type="ECO:0000269" key="8">
    <source>
    </source>
</evidence>
<evidence type="ECO:0000303" key="9">
    <source>
    </source>
</evidence>
<evidence type="ECO:0000305" key="10"/>
<protein>
    <recommendedName>
        <fullName>BTB/POZ domain-containing protein KCTD6</fullName>
    </recommendedName>
    <alternativeName>
        <fullName evidence="9">KCASH3 protein</fullName>
    </alternativeName>
    <alternativeName>
        <fullName>Potassium channel tetramerization domain-containing protein 6</fullName>
    </alternativeName>
</protein>
<reference key="1">
    <citation type="journal article" date="2004" name="Nat. Genet.">
        <title>Complete sequencing and characterization of 21,243 full-length human cDNAs.</title>
        <authorList>
            <person name="Ota T."/>
            <person name="Suzuki Y."/>
            <person name="Nishikawa T."/>
            <person name="Otsuki T."/>
            <person name="Sugiyama T."/>
            <person name="Irie R."/>
            <person name="Wakamatsu A."/>
            <person name="Hayashi K."/>
            <person name="Sato H."/>
            <person name="Nagai K."/>
            <person name="Kimura K."/>
            <person name="Makita H."/>
            <person name="Sekine M."/>
            <person name="Obayashi M."/>
            <person name="Nishi T."/>
            <person name="Shibahara T."/>
            <person name="Tanaka T."/>
            <person name="Ishii S."/>
            <person name="Yamamoto J."/>
            <person name="Saito K."/>
            <person name="Kawai Y."/>
            <person name="Isono Y."/>
            <person name="Nakamura Y."/>
            <person name="Nagahari K."/>
            <person name="Murakami K."/>
            <person name="Yasuda T."/>
            <person name="Iwayanagi T."/>
            <person name="Wagatsuma M."/>
            <person name="Shiratori A."/>
            <person name="Sudo H."/>
            <person name="Hosoiri T."/>
            <person name="Kaku Y."/>
            <person name="Kodaira H."/>
            <person name="Kondo H."/>
            <person name="Sugawara M."/>
            <person name="Takahashi M."/>
            <person name="Kanda K."/>
            <person name="Yokoi T."/>
            <person name="Furuya T."/>
            <person name="Kikkawa E."/>
            <person name="Omura Y."/>
            <person name="Abe K."/>
            <person name="Kamihara K."/>
            <person name="Katsuta N."/>
            <person name="Sato K."/>
            <person name="Tanikawa M."/>
            <person name="Yamazaki M."/>
            <person name="Ninomiya K."/>
            <person name="Ishibashi T."/>
            <person name="Yamashita H."/>
            <person name="Murakawa K."/>
            <person name="Fujimori K."/>
            <person name="Tanai H."/>
            <person name="Kimata M."/>
            <person name="Watanabe M."/>
            <person name="Hiraoka S."/>
            <person name="Chiba Y."/>
            <person name="Ishida S."/>
            <person name="Ono Y."/>
            <person name="Takiguchi S."/>
            <person name="Watanabe S."/>
            <person name="Yosida M."/>
            <person name="Hotuta T."/>
            <person name="Kusano J."/>
            <person name="Kanehori K."/>
            <person name="Takahashi-Fujii A."/>
            <person name="Hara H."/>
            <person name="Tanase T.-O."/>
            <person name="Nomura Y."/>
            <person name="Togiya S."/>
            <person name="Komai F."/>
            <person name="Hara R."/>
            <person name="Takeuchi K."/>
            <person name="Arita M."/>
            <person name="Imose N."/>
            <person name="Musashino K."/>
            <person name="Yuuki H."/>
            <person name="Oshima A."/>
            <person name="Sasaki N."/>
            <person name="Aotsuka S."/>
            <person name="Yoshikawa Y."/>
            <person name="Matsunawa H."/>
            <person name="Ichihara T."/>
            <person name="Shiohata N."/>
            <person name="Sano S."/>
            <person name="Moriya S."/>
            <person name="Momiyama H."/>
            <person name="Satoh N."/>
            <person name="Takami S."/>
            <person name="Terashima Y."/>
            <person name="Suzuki O."/>
            <person name="Nakagawa S."/>
            <person name="Senoh A."/>
            <person name="Mizoguchi H."/>
            <person name="Goto Y."/>
            <person name="Shimizu F."/>
            <person name="Wakebe H."/>
            <person name="Hishigaki H."/>
            <person name="Watanabe T."/>
            <person name="Sugiyama A."/>
            <person name="Takemoto M."/>
            <person name="Kawakami B."/>
            <person name="Yamazaki M."/>
            <person name="Watanabe K."/>
            <person name="Kumagai A."/>
            <person name="Itakura S."/>
            <person name="Fukuzumi Y."/>
            <person name="Fujimori Y."/>
            <person name="Komiyama M."/>
            <person name="Tashiro H."/>
            <person name="Tanigami A."/>
            <person name="Fujiwara T."/>
            <person name="Ono T."/>
            <person name="Yamada K."/>
            <person name="Fujii Y."/>
            <person name="Ozaki K."/>
            <person name="Hirao M."/>
            <person name="Ohmori Y."/>
            <person name="Kawabata A."/>
            <person name="Hikiji T."/>
            <person name="Kobatake N."/>
            <person name="Inagaki H."/>
            <person name="Ikema Y."/>
            <person name="Okamoto S."/>
            <person name="Okitani R."/>
            <person name="Kawakami T."/>
            <person name="Noguchi S."/>
            <person name="Itoh T."/>
            <person name="Shigeta K."/>
            <person name="Senba T."/>
            <person name="Matsumura K."/>
            <person name="Nakajima Y."/>
            <person name="Mizuno T."/>
            <person name="Morinaga M."/>
            <person name="Sasaki M."/>
            <person name="Togashi T."/>
            <person name="Oyama M."/>
            <person name="Hata H."/>
            <person name="Watanabe M."/>
            <person name="Komatsu T."/>
            <person name="Mizushima-Sugano J."/>
            <person name="Satoh T."/>
            <person name="Shirai Y."/>
            <person name="Takahashi Y."/>
            <person name="Nakagawa K."/>
            <person name="Okumura K."/>
            <person name="Nagase T."/>
            <person name="Nomura N."/>
            <person name="Kikuchi H."/>
            <person name="Masuho Y."/>
            <person name="Yamashita R."/>
            <person name="Nakai K."/>
            <person name="Yada T."/>
            <person name="Nakamura Y."/>
            <person name="Ohara O."/>
            <person name="Isogai T."/>
            <person name="Sugano S."/>
        </authorList>
    </citation>
    <scope>NUCLEOTIDE SEQUENCE [LARGE SCALE MRNA]</scope>
</reference>
<reference key="2">
    <citation type="journal article" date="2005" name="DNA Res.">
        <title>Signal sequence and keyword trap in silico for selection of full-length human cDNAs encoding secretion or membrane proteins from oligo-capped cDNA libraries.</title>
        <authorList>
            <person name="Otsuki T."/>
            <person name="Ota T."/>
            <person name="Nishikawa T."/>
            <person name="Hayashi K."/>
            <person name="Suzuki Y."/>
            <person name="Yamamoto J."/>
            <person name="Wakamatsu A."/>
            <person name="Kimura K."/>
            <person name="Sakamoto K."/>
            <person name="Hatano N."/>
            <person name="Kawai Y."/>
            <person name="Ishii S."/>
            <person name="Saito K."/>
            <person name="Kojima S."/>
            <person name="Sugiyama T."/>
            <person name="Ono T."/>
            <person name="Okano K."/>
            <person name="Yoshikawa Y."/>
            <person name="Aotsuka S."/>
            <person name="Sasaki N."/>
            <person name="Hattori A."/>
            <person name="Okumura K."/>
            <person name="Nagai K."/>
            <person name="Sugano S."/>
            <person name="Isogai T."/>
        </authorList>
    </citation>
    <scope>NUCLEOTIDE SEQUENCE [LARGE SCALE MRNA]</scope>
</reference>
<reference key="3">
    <citation type="submission" date="2005-07" db="EMBL/GenBank/DDBJ databases">
        <authorList>
            <person name="Mural R.J."/>
            <person name="Istrail S."/>
            <person name="Sutton G.G."/>
            <person name="Florea L."/>
            <person name="Halpern A.L."/>
            <person name="Mobarry C.M."/>
            <person name="Lippert R."/>
            <person name="Walenz B."/>
            <person name="Shatkay H."/>
            <person name="Dew I."/>
            <person name="Miller J.R."/>
            <person name="Flanigan M.J."/>
            <person name="Edwards N.J."/>
            <person name="Bolanos R."/>
            <person name="Fasulo D."/>
            <person name="Halldorsson B.V."/>
            <person name="Hannenhalli S."/>
            <person name="Turner R."/>
            <person name="Yooseph S."/>
            <person name="Lu F."/>
            <person name="Nusskern D.R."/>
            <person name="Shue B.C."/>
            <person name="Zheng X.H."/>
            <person name="Zhong F."/>
            <person name="Delcher A.L."/>
            <person name="Huson D.H."/>
            <person name="Kravitz S.A."/>
            <person name="Mouchard L."/>
            <person name="Reinert K."/>
            <person name="Remington K.A."/>
            <person name="Clark A.G."/>
            <person name="Waterman M.S."/>
            <person name="Eichler E.E."/>
            <person name="Adams M.D."/>
            <person name="Hunkapiller M.W."/>
            <person name="Myers E.W."/>
            <person name="Venter J.C."/>
        </authorList>
    </citation>
    <scope>NUCLEOTIDE SEQUENCE [LARGE SCALE GENOMIC DNA]</scope>
</reference>
<reference key="4">
    <citation type="journal article" date="2004" name="Genome Res.">
        <title>The status, quality, and expansion of the NIH full-length cDNA project: the Mammalian Gene Collection (MGC).</title>
        <authorList>
            <consortium name="The MGC Project Team"/>
        </authorList>
    </citation>
    <scope>NUCLEOTIDE SEQUENCE [LARGE SCALE MRNA]</scope>
    <source>
        <tissue>Lung</tissue>
    </source>
</reference>
<reference key="5">
    <citation type="journal article" date="2011" name="Neoplasia">
        <title>Identification and characterization of KCASH2 and KCASH3, 2 novel Cullin3 adaptors suppressing histone deacetylase and Hedgehog activity in medulloblastoma.</title>
        <authorList>
            <person name="De Smaele E."/>
            <person name="Di Marcotullio L."/>
            <person name="Moretti M."/>
            <person name="Pelloni M."/>
            <person name="Occhione M.A."/>
            <person name="Infante P."/>
            <person name="Cucchi D."/>
            <person name="Greco A."/>
            <person name="Pietrosanti L."/>
            <person name="Todorovic J."/>
            <person name="Coni S."/>
            <person name="Canettieri G."/>
            <person name="Ferretti E."/>
            <person name="Bei R."/>
            <person name="Maroder M."/>
            <person name="Screpanti I."/>
            <person name="Gulino A."/>
        </authorList>
    </citation>
    <scope>SUBUNIT</scope>
    <scope>FUNCTION</scope>
    <scope>TISSUE SPECIFICITY</scope>
</reference>
<reference key="6">
    <citation type="journal article" date="2012" name="Mol. Biol. Cell">
        <title>Obscurin and KCTD6 regulate cullin-dependent small ankyrin-1 (sAnk1.5) protein turnover.</title>
        <authorList>
            <person name="Lange S."/>
            <person name="Perera S."/>
            <person name="Teh P."/>
            <person name="Chen J."/>
        </authorList>
    </citation>
    <scope>INTERACTION WITH ANK1</scope>
    <scope>FUNCTION</scope>
    <scope>SUBCELLULAR LOCATION</scope>
</reference>
<reference key="7">
    <citation type="journal article" date="2013" name="Biomed. Res. Int.">
        <title>Thermal and chemical stability of two homologous POZ/BTB domains of KCTD proteins characterized by a different oligomeric organization.</title>
        <authorList>
            <person name="Pirone L."/>
            <person name="Esposito C."/>
            <person name="Correale S."/>
            <person name="Graziano G."/>
            <person name="Di Gaetano S."/>
            <person name="Vitagliano L."/>
            <person name="Pedone E."/>
        </authorList>
    </citation>
    <scope>SUBUNIT</scope>
</reference>
<reference key="8">
    <citation type="journal article" date="2015" name="PLoS ONE">
        <title>Cullin 3 recognition is not a universal property among KCTD proteins.</title>
        <authorList>
            <person name="Smaldone G."/>
            <person name="Pirone L."/>
            <person name="Balasco N."/>
            <person name="Di Gaetano S."/>
            <person name="Pedone E.M."/>
            <person name="Vitagliano L."/>
        </authorList>
    </citation>
    <scope>INTERACTION WITH CUL3</scope>
</reference>
<reference key="9">
    <citation type="journal article" date="2016" name="FEBS Lett.">
        <title>The BTB domains of the potassium channel tetramerization domain proteins prevalently assume pentameric states.</title>
        <authorList>
            <person name="Smaldone G."/>
            <person name="Pirone L."/>
            <person name="Pedone E."/>
            <person name="Marlovits T."/>
            <person name="Vitagliano L."/>
            <person name="Ciccarelli L."/>
        </authorList>
    </citation>
    <scope>PENTAMERIZATION</scope>
    <scope>ELECTRON MICROSCOPY OF THE KCTD6:CUL3 COMPLEX</scope>
</reference>
<reference key="10">
    <citation type="journal article" date="2016" name="J. Cell Sci.">
        <title>The centrosomal deubiquitylase USP21 regulates Gli1 transcriptional activity and stability.</title>
        <authorList>
            <person name="Heride C."/>
            <person name="Rigden D.J."/>
            <person name="Bertsoulaki E."/>
            <person name="Cucchi D."/>
            <person name="De Smaele E."/>
            <person name="Clague M.J."/>
            <person name="Urbe S."/>
        </authorList>
    </citation>
    <scope>INTERACTION WITH USP21</scope>
</reference>
<reference key="11">
    <citation type="journal article" date="2016" name="J. Mol. Biol.">
        <title>Structural insights into KCTD protein assembly and CULLIN3 recognition.</title>
        <authorList>
            <person name="Ji A.X."/>
            <person name="Chu A."/>
            <person name="Nielsen T.K."/>
            <person name="Benlekbir S."/>
            <person name="Rubinstein J.L."/>
            <person name="Prive G.G."/>
        </authorList>
    </citation>
    <scope>INTERACTION WITH CUL3</scope>
    <scope>PENTAMERIZATION</scope>
</reference>
<reference key="12">
    <citation type="journal article" date="2018" name="PLoS ONE">
        <title>USP11 deubiquitinates RAE1 and plays a key role in bipolar spindle formation.</title>
        <authorList>
            <person name="Stockum A."/>
            <person name="Snijders A.P."/>
            <person name="Maertens G.N."/>
        </authorList>
    </citation>
    <scope>INTERACTION WITH USP11</scope>
</reference>
<gene>
    <name type="primary">KCTD6</name>
</gene>
<name>KCTD6_HUMAN</name>
<keyword id="KW-0963">Cytoplasm</keyword>
<keyword id="KW-0341">Growth regulation</keyword>
<keyword id="KW-1267">Proteomics identification</keyword>
<keyword id="KW-1185">Reference proteome</keyword>
<keyword id="KW-0043">Tumor suppressor</keyword>
<keyword id="KW-0833">Ubl conjugation pathway</keyword>
<proteinExistence type="evidence at protein level"/>